<reference key="1">
    <citation type="journal article" date="1989" name="J. Biol. Chem.">
        <title>Cloning and sequencing of the gene for Tetrahymena calcium-binding 25-kDa protein (TCBP-25).</title>
        <authorList>
            <person name="Takemasa T."/>
            <person name="Ohnishi K."/>
            <person name="Kobayashi T."/>
            <person name="Takagi T."/>
            <person name="Konishi K."/>
            <person name="Watanabe Y."/>
        </authorList>
    </citation>
    <scope>NUCLEOTIDE SEQUENCE [GENOMIC DNA / MRNA]</scope>
    <source>
        <strain>B1868</strain>
    </source>
</reference>
<reference key="2">
    <citation type="journal article" date="1988" name="Eur. J. Biochem.">
        <title>Amino acid sequence of a calcium-binding protein (TCBP-10) from Tetrahymena.</title>
        <authorList>
            <person name="Kobayashi T."/>
            <person name="Takagi T."/>
            <person name="Konishi K."/>
            <person name="Ohnishi K."/>
            <person name="Watanabe Y."/>
        </authorList>
    </citation>
    <scope>PROTEIN SEQUENCE OF 117-218</scope>
</reference>
<reference key="3">
    <citation type="journal article" date="1983" name="J. Biol. Chem.">
        <title>Purification and some properties of a new Ca2+-binding protein (TCBP-10) present in tetrahymena cilium.</title>
        <authorList>
            <person name="Ohnishi K."/>
            <person name="Watanabe Y."/>
        </authorList>
    </citation>
    <scope>CALCIUM-BINDING</scope>
</reference>
<organism>
    <name type="scientific">Tetrahymena thermophila</name>
    <dbReference type="NCBI Taxonomy" id="5911"/>
    <lineage>
        <taxon>Eukaryota</taxon>
        <taxon>Sar</taxon>
        <taxon>Alveolata</taxon>
        <taxon>Ciliophora</taxon>
        <taxon>Intramacronucleata</taxon>
        <taxon>Oligohymenophorea</taxon>
        <taxon>Hymenostomatida</taxon>
        <taxon>Tetrahymenina</taxon>
        <taxon>Tetrahymenidae</taxon>
        <taxon>Tetrahymena</taxon>
    </lineage>
</organism>
<comment type="function">
    <text>Expected to play a crucial role in calcium-dependent regulation of ciliary movement.</text>
</comment>
<comment type="miscellaneous">
    <text>The 10 kDa protein binds one calcium ion.</text>
</comment>
<comment type="sequence caution" evidence="2">
    <conflict type="erroneous initiation">
        <sequence resource="EMBL-CDS" id="AAA30112"/>
    </conflict>
</comment>
<sequence length="218" mass="24703">MAQYSQTLRSSGFTSTVGLTDIEGAKTVARRIFENYDKGRKGRIENTDCVPMITEAYKSFNSFFAPSSDDIKAYHRVLDRNGDGIVTYQDIEELCIRYLTGTTVQRTIVTEEKVKKSSKPKYNPEVEAKLDVARRLFKRYDKDGSGQLQDDEIAGLLKDTYAEMGMSNFTPTKEDVKIWLQMADTNSDGSVSLEEYEDLIIKSLQKAGIRVEKQSLVF</sequence>
<name>CB25_TETTH</name>
<accession>P09226</accession>
<feature type="chain" id="PRO_0000004140" description="25 kDa calcium-binding protein">
    <location>
        <begin position="1"/>
        <end position="218"/>
    </location>
</feature>
<feature type="chain" id="PRO_0000004141" description="10 kDa calcium-binding protein">
    <location>
        <begin position="117"/>
        <end position="218"/>
    </location>
</feature>
<feature type="domain" description="EF-hand 1" evidence="1">
    <location>
        <begin position="24"/>
        <end position="59"/>
    </location>
</feature>
<feature type="domain" description="EF-hand 2" evidence="1">
    <location>
        <begin position="66"/>
        <end position="101"/>
    </location>
</feature>
<feature type="domain" description="EF-hand 3" evidence="1">
    <location>
        <begin position="128"/>
        <end position="163"/>
    </location>
</feature>
<feature type="domain" description="EF-hand 4" evidence="1">
    <location>
        <begin position="171"/>
        <end position="206"/>
    </location>
</feature>
<feature type="binding site" evidence="2">
    <location>
        <position position="37"/>
    </location>
    <ligand>
        <name>Ca(2+)</name>
        <dbReference type="ChEBI" id="CHEBI:29108"/>
        <label>1</label>
    </ligand>
</feature>
<feature type="binding site" evidence="2">
    <location>
        <position position="43"/>
    </location>
    <ligand>
        <name>Ca(2+)</name>
        <dbReference type="ChEBI" id="CHEBI:29108"/>
        <label>1</label>
    </ligand>
</feature>
<feature type="binding site" evidence="2">
    <location>
        <position position="48"/>
    </location>
    <ligand>
        <name>Ca(2+)</name>
        <dbReference type="ChEBI" id="CHEBI:29108"/>
        <label>1</label>
    </ligand>
</feature>
<feature type="binding site" evidence="1">
    <location>
        <position position="79"/>
    </location>
    <ligand>
        <name>Ca(2+)</name>
        <dbReference type="ChEBI" id="CHEBI:29108"/>
        <label>2</label>
    </ligand>
</feature>
<feature type="binding site" evidence="1">
    <location>
        <position position="81"/>
    </location>
    <ligand>
        <name>Ca(2+)</name>
        <dbReference type="ChEBI" id="CHEBI:29108"/>
        <label>2</label>
    </ligand>
</feature>
<feature type="binding site" evidence="1">
    <location>
        <position position="83"/>
    </location>
    <ligand>
        <name>Ca(2+)</name>
        <dbReference type="ChEBI" id="CHEBI:29108"/>
        <label>2</label>
    </ligand>
</feature>
<feature type="binding site" evidence="1">
    <location>
        <position position="90"/>
    </location>
    <ligand>
        <name>Ca(2+)</name>
        <dbReference type="ChEBI" id="CHEBI:29108"/>
        <label>2</label>
    </ligand>
</feature>
<feature type="binding site" evidence="1">
    <location>
        <position position="141"/>
    </location>
    <ligand>
        <name>Ca(2+)</name>
        <dbReference type="ChEBI" id="CHEBI:29108"/>
        <label>3</label>
    </ligand>
</feature>
<feature type="binding site" evidence="1">
    <location>
        <position position="143"/>
    </location>
    <ligand>
        <name>Ca(2+)</name>
        <dbReference type="ChEBI" id="CHEBI:29108"/>
        <label>3</label>
    </ligand>
</feature>
<feature type="binding site" evidence="1">
    <location>
        <position position="145"/>
    </location>
    <ligand>
        <name>Ca(2+)</name>
        <dbReference type="ChEBI" id="CHEBI:29108"/>
        <label>3</label>
    </ligand>
</feature>
<feature type="binding site" evidence="1">
    <location>
        <position position="147"/>
    </location>
    <ligand>
        <name>Ca(2+)</name>
        <dbReference type="ChEBI" id="CHEBI:29108"/>
        <label>3</label>
    </ligand>
</feature>
<feature type="binding site" evidence="1">
    <location>
        <position position="152"/>
    </location>
    <ligand>
        <name>Ca(2+)</name>
        <dbReference type="ChEBI" id="CHEBI:29108"/>
        <label>3</label>
    </ligand>
</feature>
<feature type="binding site" evidence="1">
    <location>
        <position position="184"/>
    </location>
    <ligand>
        <name>Ca(2+)</name>
        <dbReference type="ChEBI" id="CHEBI:29108"/>
        <label>4</label>
    </ligand>
</feature>
<feature type="binding site" evidence="1">
    <location>
        <position position="186"/>
    </location>
    <ligand>
        <name>Ca(2+)</name>
        <dbReference type="ChEBI" id="CHEBI:29108"/>
        <label>4</label>
    </ligand>
</feature>
<feature type="binding site" evidence="1">
    <location>
        <position position="188"/>
    </location>
    <ligand>
        <name>Ca(2+)</name>
        <dbReference type="ChEBI" id="CHEBI:29108"/>
        <label>4</label>
    </ligand>
</feature>
<feature type="binding site" evidence="1">
    <location>
        <position position="190"/>
    </location>
    <ligand>
        <name>Ca(2+)</name>
        <dbReference type="ChEBI" id="CHEBI:29108"/>
        <label>4</label>
    </ligand>
</feature>
<feature type="binding site" evidence="1">
    <location>
        <position position="195"/>
    </location>
    <ligand>
        <name>Ca(2+)</name>
        <dbReference type="ChEBI" id="CHEBI:29108"/>
        <label>4</label>
    </ligand>
</feature>
<feature type="sequence conflict" description="In Ref. 1; AAA30113." evidence="2" ref="1">
    <original>P</original>
    <variation>N</variation>
    <location>
        <position position="124"/>
    </location>
</feature>
<feature type="helix" evidence="3">
    <location>
        <begin position="124"/>
        <end position="140"/>
    </location>
</feature>
<feature type="strand" evidence="3">
    <location>
        <begin position="145"/>
        <end position="148"/>
    </location>
</feature>
<feature type="helix" evidence="3">
    <location>
        <begin position="151"/>
        <end position="164"/>
    </location>
</feature>
<feature type="helix" evidence="3">
    <location>
        <begin position="173"/>
        <end position="182"/>
    </location>
</feature>
<feature type="strand" evidence="3">
    <location>
        <begin position="186"/>
        <end position="189"/>
    </location>
</feature>
<feature type="helix" evidence="3">
    <location>
        <begin position="193"/>
        <end position="205"/>
    </location>
</feature>
<feature type="turn" evidence="3">
    <location>
        <begin position="206"/>
        <end position="208"/>
    </location>
</feature>
<proteinExistence type="evidence at protein level"/>
<keyword id="KW-0002">3D-structure</keyword>
<keyword id="KW-0106">Calcium</keyword>
<keyword id="KW-0970">Cilium biogenesis/degradation</keyword>
<keyword id="KW-0165">Cleavage on pair of basic residues</keyword>
<keyword id="KW-0903">Direct protein sequencing</keyword>
<keyword id="KW-0479">Metal-binding</keyword>
<keyword id="KW-0677">Repeat</keyword>
<evidence type="ECO:0000255" key="1">
    <source>
        <dbReference type="PROSITE-ProRule" id="PRU00448"/>
    </source>
</evidence>
<evidence type="ECO:0000305" key="2"/>
<evidence type="ECO:0007829" key="3">
    <source>
        <dbReference type="PDB" id="2NCO"/>
    </source>
</evidence>
<dbReference type="EMBL" id="J05110">
    <property type="protein sequence ID" value="AAA30113.1"/>
    <property type="status" value="ALT_SEQ"/>
    <property type="molecule type" value="mRNA"/>
</dbReference>
<dbReference type="EMBL" id="J05109">
    <property type="protein sequence ID" value="AAA30112.1"/>
    <property type="status" value="ALT_INIT"/>
    <property type="molecule type" value="Genomic_DNA"/>
</dbReference>
<dbReference type="PIR" id="A34445">
    <property type="entry name" value="A34445"/>
</dbReference>
<dbReference type="PDB" id="2NCO">
    <property type="method" value="NMR"/>
    <property type="chains" value="A=117-218"/>
</dbReference>
<dbReference type="PDB" id="2NCP">
    <property type="method" value="NMR"/>
    <property type="chains" value="A=117-218"/>
</dbReference>
<dbReference type="PDBsum" id="2NCO"/>
<dbReference type="PDBsum" id="2NCP"/>
<dbReference type="SMR" id="P09226"/>
<dbReference type="OMA" id="MITEAYK"/>
<dbReference type="GO" id="GO:0005829">
    <property type="term" value="C:cytosol"/>
    <property type="evidence" value="ECO:0007669"/>
    <property type="project" value="TreeGrafter"/>
</dbReference>
<dbReference type="GO" id="GO:0005634">
    <property type="term" value="C:nucleus"/>
    <property type="evidence" value="ECO:0007669"/>
    <property type="project" value="TreeGrafter"/>
</dbReference>
<dbReference type="GO" id="GO:0005509">
    <property type="term" value="F:calcium ion binding"/>
    <property type="evidence" value="ECO:0007669"/>
    <property type="project" value="InterPro"/>
</dbReference>
<dbReference type="GO" id="GO:0030030">
    <property type="term" value="P:cell projection organization"/>
    <property type="evidence" value="ECO:0007669"/>
    <property type="project" value="UniProtKB-KW"/>
</dbReference>
<dbReference type="GO" id="GO:0051480">
    <property type="term" value="P:regulation of cytosolic calcium ion concentration"/>
    <property type="evidence" value="ECO:0007669"/>
    <property type="project" value="TreeGrafter"/>
</dbReference>
<dbReference type="CDD" id="cd00051">
    <property type="entry name" value="EFh"/>
    <property type="match status" value="1"/>
</dbReference>
<dbReference type="Gene3D" id="1.10.238.10">
    <property type="entry name" value="EF-hand"/>
    <property type="match status" value="2"/>
</dbReference>
<dbReference type="InterPro" id="IPR051001">
    <property type="entry name" value="Calbindin_Ca-bind"/>
</dbReference>
<dbReference type="InterPro" id="IPR011992">
    <property type="entry name" value="EF-hand-dom_pair"/>
</dbReference>
<dbReference type="InterPro" id="IPR018247">
    <property type="entry name" value="EF_Hand_1_Ca_BS"/>
</dbReference>
<dbReference type="InterPro" id="IPR002048">
    <property type="entry name" value="EF_hand_dom"/>
</dbReference>
<dbReference type="PANTHER" id="PTHR19972">
    <property type="entry name" value="CALBINDIN"/>
    <property type="match status" value="1"/>
</dbReference>
<dbReference type="PANTHER" id="PTHR19972:SF10">
    <property type="entry name" value="CALBINDIN-32"/>
    <property type="match status" value="1"/>
</dbReference>
<dbReference type="Pfam" id="PF13499">
    <property type="entry name" value="EF-hand_7"/>
    <property type="match status" value="1"/>
</dbReference>
<dbReference type="SMART" id="SM00054">
    <property type="entry name" value="EFh"/>
    <property type="match status" value="4"/>
</dbReference>
<dbReference type="SUPFAM" id="SSF47473">
    <property type="entry name" value="EF-hand"/>
    <property type="match status" value="1"/>
</dbReference>
<dbReference type="PROSITE" id="PS00018">
    <property type="entry name" value="EF_HAND_1"/>
    <property type="match status" value="3"/>
</dbReference>
<dbReference type="PROSITE" id="PS50222">
    <property type="entry name" value="EF_HAND_2"/>
    <property type="match status" value="4"/>
</dbReference>
<protein>
    <recommendedName>
        <fullName>25 kDa calcium-binding protein</fullName>
    </recommendedName>
    <alternativeName>
        <fullName>TCBP-25</fullName>
    </alternativeName>
    <component>
        <recommendedName>
            <fullName>10 kDa calcium-binding protein</fullName>
        </recommendedName>
        <alternativeName>
            <fullName>TCBP-10</fullName>
        </alternativeName>
    </component>
</protein>